<comment type="function">
    <text evidence="2">Substrate recognition component of a SCF (SKP1-CUL1-F-box protein) E3 ubiquitin-protein ligase complex that mediates the ubiquitination and subsequent proteasomal degradation of target proteins. Promotes ubiquitination of cyclin-D1 (CCND1) and its subsequent proteasomal degradation. However, it does not act as a major regulator of CCND1 stability during the G1/S transition. Recognizes TERF1 and promotes its ubiquitination together with UBE2D1. Promotes ubiquitination of FXR1 following phosphorylation of FXR1 by GSK3B, leading to FXR1 degradation by the proteasome.</text>
</comment>
<comment type="pathway">
    <text evidence="2">Protein modification; protein ubiquitination.</text>
</comment>
<comment type="subunit">
    <text evidence="1 2">Homodimer. Part of the SCF (SKP1-CUL1-F-box) E3 ubiquitin-protein ligase complex SCF(FBXO4) formed of CUL1, SKP1, RBX1 and FBXO4. Interacts with TERF1; this interaction is prevented in the presence of GNL3L (By similarity). Identified in a complex with CRYAB and CCND1 (By similarity).</text>
</comment>
<comment type="subcellular location">
    <subcellularLocation>
        <location evidence="1">Cytoplasm</location>
    </subcellularLocation>
</comment>
<comment type="PTM">
    <text evidence="1 2">Phosphorylation at Ser-11 varies during the cell cycle. It is low in resting cells and high in the S phase and the G2/M phase of the cell cycle. Phosphorylation is decreased during late G1 phase (By similarity). Phosphorylation at Ser-11 promotes homodimerization and is necessary for optimal ubiquitin ligase activity towards CCND1 (By similarity).</text>
</comment>
<proteinExistence type="evidence at transcript level"/>
<dbReference type="EMBL" id="BC102371">
    <property type="protein sequence ID" value="AAI02372.1"/>
    <property type="molecule type" value="mRNA"/>
</dbReference>
<dbReference type="RefSeq" id="NP_001029789.1">
    <property type="nucleotide sequence ID" value="NM_001034617.1"/>
</dbReference>
<dbReference type="SMR" id="Q3T0J1"/>
<dbReference type="FunCoup" id="Q3T0J1">
    <property type="interactions" value="1351"/>
</dbReference>
<dbReference type="STRING" id="9913.ENSBTAP00000022583"/>
<dbReference type="PaxDb" id="9913-ENSBTAP00000022583"/>
<dbReference type="Ensembl" id="ENSBTAT00000022583.6">
    <property type="protein sequence ID" value="ENSBTAP00000022583.5"/>
    <property type="gene ID" value="ENSBTAG00000016981.6"/>
</dbReference>
<dbReference type="GeneID" id="534852"/>
<dbReference type="KEGG" id="bta:534852"/>
<dbReference type="CTD" id="26272"/>
<dbReference type="VEuPathDB" id="HostDB:ENSBTAG00000016981"/>
<dbReference type="VGNC" id="VGNC:28910">
    <property type="gene designation" value="FBXO4"/>
</dbReference>
<dbReference type="eggNOG" id="ENOG502QUXD">
    <property type="taxonomic scope" value="Eukaryota"/>
</dbReference>
<dbReference type="GeneTree" id="ENSGT00390000014416"/>
<dbReference type="InParanoid" id="Q3T0J1"/>
<dbReference type="OMA" id="HYSVIAQ"/>
<dbReference type="OrthoDB" id="3219396at2759"/>
<dbReference type="Reactome" id="R-BTA-8951664">
    <property type="pathway name" value="Neddylation"/>
</dbReference>
<dbReference type="Reactome" id="R-BTA-983168">
    <property type="pathway name" value="Antigen processing: Ubiquitination &amp; Proteasome degradation"/>
</dbReference>
<dbReference type="UniPathway" id="UPA00143"/>
<dbReference type="Proteomes" id="UP000009136">
    <property type="component" value="Chromosome 20"/>
</dbReference>
<dbReference type="Bgee" id="ENSBTAG00000016981">
    <property type="expression patterns" value="Expressed in oocyte and 105 other cell types or tissues"/>
</dbReference>
<dbReference type="GO" id="GO:0005737">
    <property type="term" value="C:cytoplasm"/>
    <property type="evidence" value="ECO:0007669"/>
    <property type="project" value="UniProtKB-SubCell"/>
</dbReference>
<dbReference type="GO" id="GO:0019005">
    <property type="term" value="C:SCF ubiquitin ligase complex"/>
    <property type="evidence" value="ECO:0000250"/>
    <property type="project" value="UniProtKB"/>
</dbReference>
<dbReference type="GO" id="GO:0031398">
    <property type="term" value="P:positive regulation of protein ubiquitination"/>
    <property type="evidence" value="ECO:0000250"/>
    <property type="project" value="UniProtKB"/>
</dbReference>
<dbReference type="GO" id="GO:0000209">
    <property type="term" value="P:protein polyubiquitination"/>
    <property type="evidence" value="ECO:0000250"/>
    <property type="project" value="UniProtKB"/>
</dbReference>
<dbReference type="GO" id="GO:0031146">
    <property type="term" value="P:SCF-dependent proteasomal ubiquitin-dependent protein catabolic process"/>
    <property type="evidence" value="ECO:0000250"/>
    <property type="project" value="UniProtKB"/>
</dbReference>
<dbReference type="GO" id="GO:0000723">
    <property type="term" value="P:telomere maintenance"/>
    <property type="evidence" value="ECO:0000250"/>
    <property type="project" value="UniProtKB"/>
</dbReference>
<dbReference type="GO" id="GO:0006511">
    <property type="term" value="P:ubiquitin-dependent protein catabolic process"/>
    <property type="evidence" value="ECO:0000250"/>
    <property type="project" value="UniProtKB"/>
</dbReference>
<dbReference type="CDD" id="cd22085">
    <property type="entry name" value="F-box_FBXO4"/>
    <property type="match status" value="1"/>
</dbReference>
<dbReference type="CDD" id="cd11656">
    <property type="entry name" value="FBX4_GTPase_like"/>
    <property type="match status" value="1"/>
</dbReference>
<dbReference type="FunFam" id="3.40.50.300:FF:001110">
    <property type="entry name" value="F-box only protein 4"/>
    <property type="match status" value="1"/>
</dbReference>
<dbReference type="FunFam" id="1.20.1280.50:FF:000020">
    <property type="entry name" value="F-box only protein 4 (Predicted)"/>
    <property type="match status" value="1"/>
</dbReference>
<dbReference type="Gene3D" id="1.20.1280.50">
    <property type="match status" value="1"/>
</dbReference>
<dbReference type="Gene3D" id="3.40.50.300">
    <property type="entry name" value="P-loop containing nucleotide triphosphate hydrolases"/>
    <property type="match status" value="1"/>
</dbReference>
<dbReference type="InterPro" id="IPR036047">
    <property type="entry name" value="F-box-like_dom_sf"/>
</dbReference>
<dbReference type="InterPro" id="IPR001810">
    <property type="entry name" value="F-box_dom"/>
</dbReference>
<dbReference type="InterPro" id="IPR039588">
    <property type="entry name" value="FBXO4"/>
</dbReference>
<dbReference type="InterPro" id="IPR027417">
    <property type="entry name" value="P-loop_NTPase"/>
</dbReference>
<dbReference type="PANTHER" id="PTHR16008">
    <property type="entry name" value="F-BOX ONLY PROTEIN 4"/>
    <property type="match status" value="1"/>
</dbReference>
<dbReference type="PANTHER" id="PTHR16008:SF4">
    <property type="entry name" value="F-BOX ONLY PROTEIN 4"/>
    <property type="match status" value="1"/>
</dbReference>
<dbReference type="Pfam" id="PF12937">
    <property type="entry name" value="F-box-like"/>
    <property type="match status" value="1"/>
</dbReference>
<dbReference type="SMART" id="SM00256">
    <property type="entry name" value="FBOX"/>
    <property type="match status" value="1"/>
</dbReference>
<dbReference type="SUPFAM" id="SSF81383">
    <property type="entry name" value="F-box domain"/>
    <property type="match status" value="1"/>
</dbReference>
<dbReference type="PROSITE" id="PS50181">
    <property type="entry name" value="FBOX"/>
    <property type="match status" value="1"/>
</dbReference>
<protein>
    <recommendedName>
        <fullName>F-box only protein 4</fullName>
    </recommendedName>
</protein>
<evidence type="ECO:0000250" key="1">
    <source>
        <dbReference type="UniProtKB" id="Q8CHQ0"/>
    </source>
</evidence>
<evidence type="ECO:0000250" key="2">
    <source>
        <dbReference type="UniProtKB" id="Q9UKT5"/>
    </source>
</evidence>
<evidence type="ECO:0000255" key="3">
    <source>
        <dbReference type="PROSITE-ProRule" id="PRU00080"/>
    </source>
</evidence>
<keyword id="KW-0963">Cytoplasm</keyword>
<keyword id="KW-0597">Phosphoprotein</keyword>
<keyword id="KW-1185">Reference proteome</keyword>
<keyword id="KW-0833">Ubl conjugation pathway</keyword>
<name>FBX4_BOVIN</name>
<gene>
    <name type="primary">FBXO4</name>
</gene>
<feature type="chain" id="PRO_0000240133" description="F-box only protein 4">
    <location>
        <begin position="1"/>
        <end position="387"/>
    </location>
</feature>
<feature type="domain" description="F-box" evidence="3">
    <location>
        <begin position="56"/>
        <end position="102"/>
    </location>
</feature>
<feature type="modified residue" description="Phosphoserine" evidence="1">
    <location>
        <position position="11"/>
    </location>
</feature>
<feature type="modified residue" description="Phosphoserine" evidence="2">
    <location>
        <position position="12"/>
    </location>
</feature>
<feature type="modified residue" description="Phosphoserine" evidence="2">
    <location>
        <position position="48"/>
    </location>
</feature>
<sequence>MAGSDPGSRGSSPQPPHSDWGRLEAAFLSGWRNFWQSVGKERAAPRASAEEVDEEASSLTRLPIDVQLYILSFLSPHDLCQLGSTSRYWNETVRDPILWRYFLLRDLPSWSSVDWKSLPDLEILKKPISEVTNGAFFDYMAVYKMCCPHTRRSSKSSRPMYGAVTSFLHSLIIQNEPRFAMFGPGLEELNTSLVLSLMSSEELCPTAGLPQRQIDGIGSGVSFQLNNQHKFNILILYSTTRKERDRAREEHTSAVNKMFSVQNEGDDQQGSRYSVIPQIQKVCEVVDGFIYVANAEAHKRHEWQDEFSRIMAMTDPAFGSSGRPMLVLSCISQANVKRMPCFYLAHELRLNHLNHPWMVQDTEAETLTGFLNGIQWILEEVESKHAR</sequence>
<reference key="1">
    <citation type="submission" date="2005-08" db="EMBL/GenBank/DDBJ databases">
        <authorList>
            <consortium name="NIH - Mammalian Gene Collection (MGC) project"/>
        </authorList>
    </citation>
    <scope>NUCLEOTIDE SEQUENCE [LARGE SCALE MRNA]</scope>
    <source>
        <strain>Crossbred X Angus</strain>
        <tissue>Ileum</tissue>
    </source>
</reference>
<organism>
    <name type="scientific">Bos taurus</name>
    <name type="common">Bovine</name>
    <dbReference type="NCBI Taxonomy" id="9913"/>
    <lineage>
        <taxon>Eukaryota</taxon>
        <taxon>Metazoa</taxon>
        <taxon>Chordata</taxon>
        <taxon>Craniata</taxon>
        <taxon>Vertebrata</taxon>
        <taxon>Euteleostomi</taxon>
        <taxon>Mammalia</taxon>
        <taxon>Eutheria</taxon>
        <taxon>Laurasiatheria</taxon>
        <taxon>Artiodactyla</taxon>
        <taxon>Ruminantia</taxon>
        <taxon>Pecora</taxon>
        <taxon>Bovidae</taxon>
        <taxon>Bovinae</taxon>
        <taxon>Bos</taxon>
    </lineage>
</organism>
<accession>Q3T0J1</accession>